<organism>
    <name type="scientific">Thermoproteus tenax (strain ATCC 35583 / DSM 2078 / JCM 9277 / NBRC 100435 / Kra 1)</name>
    <dbReference type="NCBI Taxonomy" id="768679"/>
    <lineage>
        <taxon>Archaea</taxon>
        <taxon>Thermoproteota</taxon>
        <taxon>Thermoprotei</taxon>
        <taxon>Thermoproteales</taxon>
        <taxon>Thermoproteaceae</taxon>
        <taxon>Thermoproteus</taxon>
    </lineage>
</organism>
<name>CSA5_THETK</name>
<feature type="chain" id="PRO_0000422234" description="CRISPR system associated protein Csa5">
    <location>
        <begin position="1"/>
        <end position="130"/>
    </location>
</feature>
<comment type="function">
    <text evidence="1">CRISPR (clustered regularly interspaced short palindromic repeat) is an adaptive immune system that provides protection against mobile genetic elements (viruses, transposable elements and conjugative plasmids). CRISPR clusters contain spacers, sequences complementary to antecedent mobile elements, and target invading nucleic acids. CRISPR clusters are transcribed and processed into CRISPR RNA (crRNA) (By similarity).</text>
</comment>
<comment type="subunit">
    <text evidence="2">Can form a Cascade complex with Cas7, Cas5a, Cas3, Cas3' and Cas8a2.</text>
</comment>
<comment type="induction">
    <text evidence="2">Repressed by 5 J/m2 ultraviolet light and 50 mM NaCl, slightly induced by 20 J/m2 ultraviolet light, 100 and 150 mM Nacl. Member of the csa5-cas7-cas5a-cas3-cas3'-cas8a2 operon.</text>
</comment>
<gene>
    <name type="primary">csa5</name>
    <name type="ordered locus">TTX_1250</name>
</gene>
<dbReference type="EMBL" id="FN869859">
    <property type="protein sequence ID" value="CCC81885.1"/>
    <property type="molecule type" value="Genomic_DNA"/>
</dbReference>
<dbReference type="RefSeq" id="WP_014127140.1">
    <property type="nucleotide sequence ID" value="NC_016070.1"/>
</dbReference>
<dbReference type="SMR" id="G4RJZ0"/>
<dbReference type="STRING" id="768679.TTX_1250"/>
<dbReference type="PaxDb" id="768679-TTX_1250"/>
<dbReference type="GeneID" id="11262130"/>
<dbReference type="KEGG" id="ttn:TTX_1250"/>
<dbReference type="PATRIC" id="fig|768679.9.peg.1263"/>
<dbReference type="eggNOG" id="arCOG04193">
    <property type="taxonomic scope" value="Archaea"/>
</dbReference>
<dbReference type="HOGENOM" id="CLU_1901838_0_0_2"/>
<dbReference type="OrthoDB" id="376883at2157"/>
<dbReference type="Proteomes" id="UP000002654">
    <property type="component" value="Chromosome"/>
</dbReference>
<dbReference type="GO" id="GO:0051607">
    <property type="term" value="P:defense response to virus"/>
    <property type="evidence" value="ECO:0007669"/>
    <property type="project" value="UniProtKB-KW"/>
</dbReference>
<reference key="1">
    <citation type="journal article" date="2011" name="PLoS ONE">
        <title>The complete genome sequence of Thermoproteus tenax: a physiologically versatile member of the Crenarchaeota.</title>
        <authorList>
            <person name="Siebers B."/>
            <person name="Zaparty M."/>
            <person name="Raddatz G."/>
            <person name="Tjaden B."/>
            <person name="Albers S.V."/>
            <person name="Bell S.D."/>
            <person name="Blombach F."/>
            <person name="Kletzin A."/>
            <person name="Kyrpides N."/>
            <person name="Lanz C."/>
            <person name="Plagens A."/>
            <person name="Rampp M."/>
            <person name="Rosinus A."/>
            <person name="von Jan M."/>
            <person name="Makarova K.S."/>
            <person name="Klenk H.P."/>
            <person name="Schuster S.C."/>
            <person name="Hensel R."/>
        </authorList>
    </citation>
    <scope>NUCLEOTIDE SEQUENCE [LARGE SCALE GENOMIC DNA]</scope>
    <source>
        <strain>ATCC 35583 / DSM 2078 / JCM 9277 / NBRC 100435 / Kra 1</strain>
    </source>
</reference>
<reference key="2">
    <citation type="journal article" date="2012" name="J. Bacteriol.">
        <title>Characterization of the CRISPR/Cas subtype I-A system of the hyperthermophilic crenarchaeon Thermoproteus tenax.</title>
        <authorList>
            <person name="Plagens A."/>
            <person name="Tjaden B."/>
            <person name="Hagemann A."/>
            <person name="Randau L."/>
            <person name="Hensel R."/>
        </authorList>
    </citation>
    <scope>SUBUNIT</scope>
    <scope>INDUCTION</scope>
    <scope>OPERON STRUCTURE</scope>
    <source>
        <strain>ATCC 35583 / DSM 2078 / JCM 9277 / NBRC 100435 / Kra 1</strain>
    </source>
</reference>
<evidence type="ECO:0000250" key="1"/>
<evidence type="ECO:0000269" key="2">
    <source>
    </source>
</evidence>
<keyword id="KW-0051">Antiviral defense</keyword>
<keyword id="KW-1185">Reference proteome</keyword>
<sequence length="130" mass="15036">MESVQLKKEELVERAARSVRPAVHLEMAYDVLDELSRSPEKYPEQLAKLSRIVVKVLNDVEDELEHNPQNEELQKARNRLAAWGGYVAELAKRLEEADDRERIRMVRLFCAMALAPDKLTVELKKLLKGR</sequence>
<protein>
    <recommendedName>
        <fullName>CRISPR system associated protein Csa5</fullName>
    </recommendedName>
</protein>
<proteinExistence type="evidence at protein level"/>
<accession>G4RJZ0</accession>